<comment type="miscellaneous">
    <text evidence="1">Partially overlaps SNX41.</text>
</comment>
<comment type="caution">
    <text evidence="2">Product of a dubious gene prediction unlikely to encode a functional protein. Because of that it is not part of the S.cerevisiae S288c complete/reference proteome set.</text>
</comment>
<evidence type="ECO:0000305" key="1"/>
<evidence type="ECO:0000305" key="2">
    <source>
    </source>
</evidence>
<reference key="1">
    <citation type="journal article" date="1997" name="Nature">
        <title>The nucleotide sequence of Saccharomyces cerevisiae chromosome IV.</title>
        <authorList>
            <person name="Jacq C."/>
            <person name="Alt-Moerbe J."/>
            <person name="Andre B."/>
            <person name="Arnold W."/>
            <person name="Bahr A."/>
            <person name="Ballesta J.P.G."/>
            <person name="Bargues M."/>
            <person name="Baron L."/>
            <person name="Becker A."/>
            <person name="Biteau N."/>
            <person name="Bloecker H."/>
            <person name="Blugeon C."/>
            <person name="Boskovic J."/>
            <person name="Brandt P."/>
            <person name="Brueckner M."/>
            <person name="Buitrago M.J."/>
            <person name="Coster F."/>
            <person name="Delaveau T."/>
            <person name="del Rey F."/>
            <person name="Dujon B."/>
            <person name="Eide L.G."/>
            <person name="Garcia-Cantalejo J.M."/>
            <person name="Goffeau A."/>
            <person name="Gomez-Peris A."/>
            <person name="Granotier C."/>
            <person name="Hanemann V."/>
            <person name="Hankeln T."/>
            <person name="Hoheisel J.D."/>
            <person name="Jaeger W."/>
            <person name="Jimenez A."/>
            <person name="Jonniaux J.-L."/>
            <person name="Kraemer C."/>
            <person name="Kuester H."/>
            <person name="Laamanen P."/>
            <person name="Legros Y."/>
            <person name="Louis E.J."/>
            <person name="Moeller-Rieker S."/>
            <person name="Monnet A."/>
            <person name="Moro M."/>
            <person name="Mueller-Auer S."/>
            <person name="Nussbaumer B."/>
            <person name="Paricio N."/>
            <person name="Paulin L."/>
            <person name="Perea J."/>
            <person name="Perez-Alonso M."/>
            <person name="Perez-Ortin J.E."/>
            <person name="Pohl T.M."/>
            <person name="Prydz H."/>
            <person name="Purnelle B."/>
            <person name="Rasmussen S.W."/>
            <person name="Remacha M.A."/>
            <person name="Revuelta J.L."/>
            <person name="Rieger M."/>
            <person name="Salom D."/>
            <person name="Saluz H.P."/>
            <person name="Saiz J.E."/>
            <person name="Saren A.-M."/>
            <person name="Schaefer M."/>
            <person name="Scharfe M."/>
            <person name="Schmidt E.R."/>
            <person name="Schneider C."/>
            <person name="Scholler P."/>
            <person name="Schwarz S."/>
            <person name="Soler-Mira A."/>
            <person name="Urrestarazu L.A."/>
            <person name="Verhasselt P."/>
            <person name="Vissers S."/>
            <person name="Voet M."/>
            <person name="Volckaert G."/>
            <person name="Wagner G."/>
            <person name="Wambutt R."/>
            <person name="Wedler E."/>
            <person name="Wedler H."/>
            <person name="Woelfl S."/>
            <person name="Harris D.E."/>
            <person name="Bowman S."/>
            <person name="Brown D."/>
            <person name="Churcher C.M."/>
            <person name="Connor R."/>
            <person name="Dedman K."/>
            <person name="Gentles S."/>
            <person name="Hamlin N."/>
            <person name="Hunt S."/>
            <person name="Jones L."/>
            <person name="McDonald S."/>
            <person name="Murphy L.D."/>
            <person name="Niblett D."/>
            <person name="Odell C."/>
            <person name="Oliver K."/>
            <person name="Rajandream M.A."/>
            <person name="Richards C."/>
            <person name="Shore L."/>
            <person name="Walsh S.V."/>
            <person name="Barrell B.G."/>
            <person name="Dietrich F.S."/>
            <person name="Mulligan J.T."/>
            <person name="Allen E."/>
            <person name="Araujo R."/>
            <person name="Aviles E."/>
            <person name="Berno A."/>
            <person name="Carpenter J."/>
            <person name="Chen E."/>
            <person name="Cherry J.M."/>
            <person name="Chung E."/>
            <person name="Duncan M."/>
            <person name="Hunicke-Smith S."/>
            <person name="Hyman R.W."/>
            <person name="Komp C."/>
            <person name="Lashkari D."/>
            <person name="Lew H."/>
            <person name="Lin D."/>
            <person name="Mosedale D."/>
            <person name="Nakahara K."/>
            <person name="Namath A."/>
            <person name="Oefner P."/>
            <person name="Oh C."/>
            <person name="Petel F.X."/>
            <person name="Roberts D."/>
            <person name="Schramm S."/>
            <person name="Schroeder M."/>
            <person name="Shogren T."/>
            <person name="Shroff N."/>
            <person name="Winant A."/>
            <person name="Yelton M.A."/>
            <person name="Botstein D."/>
            <person name="Davis R.W."/>
            <person name="Johnston M."/>
            <person name="Andrews S."/>
            <person name="Brinkman R."/>
            <person name="Cooper J."/>
            <person name="Ding H."/>
            <person name="Du Z."/>
            <person name="Favello A."/>
            <person name="Fulton L."/>
            <person name="Gattung S."/>
            <person name="Greco T."/>
            <person name="Hallsworth K."/>
            <person name="Hawkins J."/>
            <person name="Hillier L.W."/>
            <person name="Jier M."/>
            <person name="Johnson D."/>
            <person name="Johnston L."/>
            <person name="Kirsten J."/>
            <person name="Kucaba T."/>
            <person name="Langston Y."/>
            <person name="Latreille P."/>
            <person name="Le T."/>
            <person name="Mardis E."/>
            <person name="Menezes S."/>
            <person name="Miller N."/>
            <person name="Nhan M."/>
            <person name="Pauley A."/>
            <person name="Peluso D."/>
            <person name="Rifkin L."/>
            <person name="Riles L."/>
            <person name="Taich A."/>
            <person name="Trevaskis E."/>
            <person name="Vignati D."/>
            <person name="Wilcox L."/>
            <person name="Wohldman P."/>
            <person name="Vaudin M."/>
            <person name="Wilson R."/>
            <person name="Waterston R."/>
            <person name="Albermann K."/>
            <person name="Hani J."/>
            <person name="Heumann K."/>
            <person name="Kleine K."/>
            <person name="Mewes H.-W."/>
            <person name="Zollner A."/>
            <person name="Zaccaria P."/>
        </authorList>
    </citation>
    <scope>NUCLEOTIDE SEQUENCE [LARGE SCALE GENOMIC DNA]</scope>
    <source>
        <strain>ATCC 204508 / S288c</strain>
    </source>
</reference>
<reference key="2">
    <citation type="journal article" date="2014" name="G3 (Bethesda)">
        <title>The reference genome sequence of Saccharomyces cerevisiae: Then and now.</title>
        <authorList>
            <person name="Engel S.R."/>
            <person name="Dietrich F.S."/>
            <person name="Fisk D.G."/>
            <person name="Binkley G."/>
            <person name="Balakrishnan R."/>
            <person name="Costanzo M.C."/>
            <person name="Dwight S.S."/>
            <person name="Hitz B.C."/>
            <person name="Karra K."/>
            <person name="Nash R.S."/>
            <person name="Weng S."/>
            <person name="Wong E.D."/>
            <person name="Lloyd P."/>
            <person name="Skrzypek M.S."/>
            <person name="Miyasato S.R."/>
            <person name="Simison M."/>
            <person name="Cherry J.M."/>
        </authorList>
    </citation>
    <scope>GENOME REANNOTATION</scope>
    <source>
        <strain>ATCC 204508 / S288c</strain>
    </source>
</reference>
<organism>
    <name type="scientific">Saccharomyces cerevisiae (strain ATCC 204508 / S288c)</name>
    <name type="common">Baker's yeast</name>
    <dbReference type="NCBI Taxonomy" id="559292"/>
    <lineage>
        <taxon>Eukaryota</taxon>
        <taxon>Fungi</taxon>
        <taxon>Dikarya</taxon>
        <taxon>Ascomycota</taxon>
        <taxon>Saccharomycotina</taxon>
        <taxon>Saccharomycetes</taxon>
        <taxon>Saccharomycetales</taxon>
        <taxon>Saccharomycetaceae</taxon>
        <taxon>Saccharomyces</taxon>
    </lineage>
</organism>
<sequence>MYIYIYIYVYAICNTMRDGNAFYRASSICNFASFQFFRHSLIHALKLAAKSFKIFPMVKLIWLYVCIKLLYDELLISSMSDIQIDRQSFNLDKSWFNCLICLDLSCSVNCLISNLLRFIVGVDVL</sequence>
<name>YD426_YEAST</name>
<proteinExistence type="uncertain"/>
<gene>
    <name type="ordered locus">YDR426C</name>
</gene>
<accession>P87268</accession>
<dbReference type="EMBL" id="U33007">
    <property type="protein sequence ID" value="AAB64895.1"/>
    <property type="molecule type" value="Genomic_DNA"/>
</dbReference>
<dbReference type="PIR" id="S69738">
    <property type="entry name" value="S69738"/>
</dbReference>
<dbReference type="PaxDb" id="4932-YDR426C"/>
<dbReference type="TopDownProteomics" id="P87268"/>
<dbReference type="EnsemblFungi" id="YDR426C_mRNA">
    <property type="protein sequence ID" value="YDR426C"/>
    <property type="gene ID" value="YDR426C"/>
</dbReference>
<dbReference type="AGR" id="SGD:S000002834"/>
<dbReference type="SGD" id="S000002834">
    <property type="gene designation" value="YDR426C"/>
</dbReference>
<dbReference type="HOGENOM" id="CLU_1994402_0_0_1"/>
<feature type="chain" id="PRO_0000299891" description="Putative uncharacterized protein YDR426C">
    <location>
        <begin position="1"/>
        <end position="125"/>
    </location>
</feature>
<protein>
    <recommendedName>
        <fullName>Putative uncharacterized protein YDR426C</fullName>
    </recommendedName>
</protein>